<dbReference type="EMBL" id="BC082003">
    <property type="protein sequence ID" value="AAH82003.1"/>
    <property type="molecule type" value="mRNA"/>
</dbReference>
<dbReference type="RefSeq" id="NP_001020215.1">
    <property type="nucleotide sequence ID" value="NM_001025044.1"/>
</dbReference>
<dbReference type="RefSeq" id="NP_001406431.1">
    <property type="nucleotide sequence ID" value="NM_001419502.1"/>
</dbReference>
<dbReference type="RefSeq" id="XP_038964013.1">
    <property type="nucleotide sequence ID" value="XM_039108085.2"/>
</dbReference>
<dbReference type="RefSeq" id="XP_038964014.1">
    <property type="nucleotide sequence ID" value="XM_039108086.2"/>
</dbReference>
<dbReference type="SMR" id="Q66H60"/>
<dbReference type="FunCoup" id="Q66H60">
    <property type="interactions" value="31"/>
</dbReference>
<dbReference type="STRING" id="10116.ENSRNOP00000017374"/>
<dbReference type="iPTMnet" id="Q66H60"/>
<dbReference type="PhosphoSitePlus" id="Q66H60"/>
<dbReference type="PaxDb" id="10116-ENSRNOP00000017374"/>
<dbReference type="Ensembl" id="ENSRNOT00000017374.7">
    <property type="protein sequence ID" value="ENSRNOP00000017374.7"/>
    <property type="gene ID" value="ENSRNOG00000012932.8"/>
</dbReference>
<dbReference type="GeneID" id="499980"/>
<dbReference type="KEGG" id="rno:499980"/>
<dbReference type="AGR" id="RGD:1559535"/>
<dbReference type="CTD" id="57639"/>
<dbReference type="RGD" id="1559535">
    <property type="gene designation" value="Ccdc146"/>
</dbReference>
<dbReference type="eggNOG" id="ENOG502QPM4">
    <property type="taxonomic scope" value="Eukaryota"/>
</dbReference>
<dbReference type="GeneTree" id="ENSGT00530000063534"/>
<dbReference type="InParanoid" id="Q66H60"/>
<dbReference type="OMA" id="PRPNAYV"/>
<dbReference type="PhylomeDB" id="Q66H60"/>
<dbReference type="PRO" id="PR:Q66H60"/>
<dbReference type="Proteomes" id="UP000002494">
    <property type="component" value="Chromosome 4"/>
</dbReference>
<dbReference type="GO" id="GO:0005930">
    <property type="term" value="C:axoneme"/>
    <property type="evidence" value="ECO:0000250"/>
    <property type="project" value="UniProtKB"/>
</dbReference>
<dbReference type="GO" id="GO:0005814">
    <property type="term" value="C:centriole"/>
    <property type="evidence" value="ECO:0000250"/>
    <property type="project" value="UniProtKB"/>
</dbReference>
<dbReference type="GO" id="GO:0005813">
    <property type="term" value="C:centrosome"/>
    <property type="evidence" value="ECO:0000266"/>
    <property type="project" value="RGD"/>
</dbReference>
<dbReference type="GO" id="GO:0036064">
    <property type="term" value="C:ciliary basal body"/>
    <property type="evidence" value="ECO:0000250"/>
    <property type="project" value="UniProtKB"/>
</dbReference>
<dbReference type="GO" id="GO:0005856">
    <property type="term" value="C:cytoskeleton"/>
    <property type="evidence" value="ECO:0000318"/>
    <property type="project" value="GO_Central"/>
</dbReference>
<dbReference type="GO" id="GO:0030496">
    <property type="term" value="C:midbody"/>
    <property type="evidence" value="ECO:0000250"/>
    <property type="project" value="UniProtKB"/>
</dbReference>
<dbReference type="GO" id="GO:0036126">
    <property type="term" value="C:sperm flagellum"/>
    <property type="evidence" value="ECO:0000250"/>
    <property type="project" value="UniProtKB"/>
</dbReference>
<dbReference type="GO" id="GO:0120212">
    <property type="term" value="C:sperm head-tail coupling apparatus"/>
    <property type="evidence" value="ECO:0000250"/>
    <property type="project" value="UniProtKB"/>
</dbReference>
<dbReference type="GO" id="GO:0044877">
    <property type="term" value="F:protein-containing complex binding"/>
    <property type="evidence" value="ECO:0000266"/>
    <property type="project" value="RGD"/>
</dbReference>
<dbReference type="GO" id="GO:0000902">
    <property type="term" value="P:cell morphogenesis"/>
    <property type="evidence" value="ECO:0000266"/>
    <property type="project" value="RGD"/>
</dbReference>
<dbReference type="GO" id="GO:0008283">
    <property type="term" value="P:cell population proliferation"/>
    <property type="evidence" value="ECO:0007669"/>
    <property type="project" value="Ensembl"/>
</dbReference>
<dbReference type="GO" id="GO:0044782">
    <property type="term" value="P:cilium organization"/>
    <property type="evidence" value="ECO:0000266"/>
    <property type="project" value="RGD"/>
</dbReference>
<dbReference type="GO" id="GO:0030317">
    <property type="term" value="P:flagellated sperm motility"/>
    <property type="evidence" value="ECO:0000266"/>
    <property type="project" value="RGD"/>
</dbReference>
<dbReference type="GO" id="GO:0010467">
    <property type="term" value="P:gene expression"/>
    <property type="evidence" value="ECO:0000266"/>
    <property type="project" value="RGD"/>
</dbReference>
<dbReference type="GO" id="GO:1905198">
    <property type="term" value="P:manchette assembly"/>
    <property type="evidence" value="ECO:0000250"/>
    <property type="project" value="UniProtKB"/>
</dbReference>
<dbReference type="GO" id="GO:0006997">
    <property type="term" value="P:nucleus organization"/>
    <property type="evidence" value="ECO:0000266"/>
    <property type="project" value="RGD"/>
</dbReference>
<dbReference type="GO" id="GO:0007338">
    <property type="term" value="P:single fertilization"/>
    <property type="evidence" value="ECO:0000266"/>
    <property type="project" value="RGD"/>
</dbReference>
<dbReference type="GO" id="GO:0007288">
    <property type="term" value="P:sperm axoneme assembly"/>
    <property type="evidence" value="ECO:0000250"/>
    <property type="project" value="UniProtKB"/>
</dbReference>
<dbReference type="GO" id="GO:0120316">
    <property type="term" value="P:sperm flagellum assembly"/>
    <property type="evidence" value="ECO:0000250"/>
    <property type="project" value="UniProtKB"/>
</dbReference>
<dbReference type="GO" id="GO:0007286">
    <property type="term" value="P:spermatid development"/>
    <property type="evidence" value="ECO:0000250"/>
    <property type="project" value="UniProtKB"/>
</dbReference>
<dbReference type="GO" id="GO:0007283">
    <property type="term" value="P:spermatogenesis"/>
    <property type="evidence" value="ECO:0000266"/>
    <property type="project" value="RGD"/>
</dbReference>
<dbReference type="PANTHER" id="PTHR32083">
    <property type="entry name" value="CILIA AND FLAGELLA-ASSOCIATED PROTEIN 58-RELATED"/>
    <property type="match status" value="1"/>
</dbReference>
<dbReference type="PANTHER" id="PTHR32083:SF34">
    <property type="entry name" value="COILED-COIL DOMAIN-CONTAINING PROTEIN 146"/>
    <property type="match status" value="1"/>
</dbReference>
<sequence>MEDRSKYIAEESEDEEDEEQEEKEKKGGASTSTETEEDQEDIPSVIVPTINIREERLVDLAQTPAFLCLNELHTSGKLPGTRMAELKAKYTLLHDTVVSTQESEVQLLENAKRFTEQIQQQQVRLQEADDFPNVFTTEVSKLREQLLKYQNEYTAVQEREYHTQYRLNSLTEEKSLVLKEFEKIPKPGEIEKKTKLLKESTEELRKEVIQKRLEIKNLREDVVSKQKQLMKEQKELEELMDYQVGLKDDVVHHQSVPVQITKEIEKLTRRKIETEKKNVVLEFELKELSDSLKKLENKVSALAEERDDTIKEVEGKRTLLEVKEREYGQLLKLLELTKENEASSLAERGILDINLRNCLMDKQNYHDELSRKQREKERDFRNLKKTELLLKVSLDALSQAQALNQRLLLEMEAIPKEDLLLPEQRKELHKEVDLAKRNLAQQRSLSEAEAKLVEQQIAEENKLLKEQETMREVLFNLGRMTQIKMEEKEQKAKDFLKSQRRYCDIIKEIKSKKLEIRLYRKRKREIHRRLKEFAGLYDAIRNERNKFVNLLHKAYQKVNEIKERLKMSLNELEILRSSAVSQERKLQNAMLKHSNNVTIRESMQNDVCKITAKLQEMKEKKEAQLTSMDRLASMITVIEEEMVQLRKKYEKAVQRRNESGVQLIEREEEVCIFYEKMNIQDKVKLHQDIEIHILEEKIRFLKLKVAEKQRQICVTQKLVPIKKSLDANLAVVQIQFSQCADRIKALEKCFVNPDCQGRVRFIPGKDLTEEEMIKKLDMLELQLAKKEEKLLEKDFIYEQVSQLTNRLKTKTQACKMDTLLLAKKMNSYQKKIKDVTQEMMALVAELSMKQALTIELQKEVREKEEFIFSCSSRIEKGLPLNREIEKDWLKVLRDEEMYAFATAEKTREYIDTDYRQLPNGVYTTAEQRPNAYIPETDATLPLPKPYGALAPFKPSEPGANRRHIRKPIIKPIEI</sequence>
<name>CC146_RAT</name>
<protein>
    <recommendedName>
        <fullName>Coiled-coil domain-containing protein 146</fullName>
    </recommendedName>
</protein>
<evidence type="ECO:0000250" key="1">
    <source>
        <dbReference type="UniProtKB" id="E9Q9F7"/>
    </source>
</evidence>
<evidence type="ECO:0000250" key="2">
    <source>
        <dbReference type="UniProtKB" id="Q8IYE0"/>
    </source>
</evidence>
<evidence type="ECO:0000255" key="3"/>
<evidence type="ECO:0000256" key="4">
    <source>
        <dbReference type="SAM" id="MobiDB-lite"/>
    </source>
</evidence>
<evidence type="ECO:0007744" key="5">
    <source>
    </source>
</evidence>
<feature type="chain" id="PRO_0000317253" description="Coiled-coil domain-containing protein 146">
    <location>
        <begin position="1"/>
        <end position="974"/>
    </location>
</feature>
<feature type="region of interest" description="Disordered" evidence="4">
    <location>
        <begin position="1"/>
        <end position="44"/>
    </location>
</feature>
<feature type="coiled-coil region" evidence="3">
    <location>
        <begin position="105"/>
        <end position="160"/>
    </location>
</feature>
<feature type="coiled-coil region" evidence="3">
    <location>
        <begin position="195"/>
        <end position="340"/>
    </location>
</feature>
<feature type="coiled-coil region" evidence="3">
    <location>
        <begin position="421"/>
        <end position="474"/>
    </location>
</feature>
<feature type="coiled-coil region" evidence="3">
    <location>
        <begin position="512"/>
        <end position="660"/>
    </location>
</feature>
<feature type="coiled-coil region" evidence="3">
    <location>
        <begin position="687"/>
        <end position="712"/>
    </location>
</feature>
<feature type="coiled-coil region" evidence="3">
    <location>
        <begin position="767"/>
        <end position="848"/>
    </location>
</feature>
<feature type="compositionally biased region" description="Acidic residues" evidence="4">
    <location>
        <begin position="10"/>
        <end position="21"/>
    </location>
</feature>
<feature type="modified residue" description="Phosphoserine" evidence="5">
    <location>
        <position position="12"/>
    </location>
</feature>
<keyword id="KW-0966">Cell projection</keyword>
<keyword id="KW-0969">Cilium</keyword>
<keyword id="KW-0175">Coiled coil</keyword>
<keyword id="KW-0963">Cytoplasm</keyword>
<keyword id="KW-0206">Cytoskeleton</keyword>
<keyword id="KW-0221">Differentiation</keyword>
<keyword id="KW-0282">Flagellum</keyword>
<keyword id="KW-0597">Phosphoprotein</keyword>
<keyword id="KW-1185">Reference proteome</keyword>
<keyword id="KW-0744">Spermatogenesis</keyword>
<reference key="1">
    <citation type="journal article" date="2004" name="Genome Res.">
        <title>The status, quality, and expansion of the NIH full-length cDNA project: the Mammalian Gene Collection (MGC).</title>
        <authorList>
            <consortium name="The MGC Project Team"/>
        </authorList>
    </citation>
    <scope>NUCLEOTIDE SEQUENCE [LARGE SCALE MRNA]</scope>
    <source>
        <tissue>Testis</tissue>
    </source>
</reference>
<reference key="2">
    <citation type="journal article" date="2012" name="Nat. Commun.">
        <title>Quantitative maps of protein phosphorylation sites across 14 different rat organs and tissues.</title>
        <authorList>
            <person name="Lundby A."/>
            <person name="Secher A."/>
            <person name="Lage K."/>
            <person name="Nordsborg N.B."/>
            <person name="Dmytriyev A."/>
            <person name="Lundby C."/>
            <person name="Olsen J.V."/>
        </authorList>
    </citation>
    <scope>PHOSPHORYLATION [LARGE SCALE ANALYSIS] AT SER-12</scope>
    <scope>IDENTIFICATION BY MASS SPECTROMETRY [LARGE SCALE ANALYSIS]</scope>
</reference>
<accession>Q66H60</accession>
<proteinExistence type="evidence at protein level"/>
<gene>
    <name type="primary">Ccdc146</name>
</gene>
<organism>
    <name type="scientific">Rattus norvegicus</name>
    <name type="common">Rat</name>
    <dbReference type="NCBI Taxonomy" id="10116"/>
    <lineage>
        <taxon>Eukaryota</taxon>
        <taxon>Metazoa</taxon>
        <taxon>Chordata</taxon>
        <taxon>Craniata</taxon>
        <taxon>Vertebrata</taxon>
        <taxon>Euteleostomi</taxon>
        <taxon>Mammalia</taxon>
        <taxon>Eutheria</taxon>
        <taxon>Euarchontoglires</taxon>
        <taxon>Glires</taxon>
        <taxon>Rodentia</taxon>
        <taxon>Myomorpha</taxon>
        <taxon>Muroidea</taxon>
        <taxon>Muridae</taxon>
        <taxon>Murinae</taxon>
        <taxon>Rattus</taxon>
    </lineage>
</organism>
<comment type="function">
    <text evidence="1">Essential for sperm flagellum biogenesis and male fertility.</text>
</comment>
<comment type="subunit">
    <text evidence="1">Interacts with CCDC38 and CCDC42. Interacts with intraflagellar transport proteins IFT20 and IFT88.</text>
</comment>
<comment type="subcellular location">
    <subcellularLocation>
        <location evidence="2">Cytoplasm</location>
        <location evidence="2">Cytoskeleton</location>
        <location evidence="2">Microtubule organizing center</location>
        <location evidence="2">Centrosome</location>
        <location evidence="2">Centriole</location>
    </subcellularLocation>
    <subcellularLocation>
        <location evidence="1">Cell projection</location>
        <location evidence="1">Cilium</location>
        <location evidence="1">Flagellum</location>
    </subcellularLocation>
    <subcellularLocation>
        <location evidence="1">Cytoplasm</location>
        <location evidence="1">Cytoskeleton</location>
        <location evidence="1">Flagellum axoneme</location>
    </subcellularLocation>
    <subcellularLocation>
        <location evidence="2">Cytoplasm</location>
        <location evidence="2">Cytoskeleton</location>
        <location evidence="2">Cilium basal body</location>
    </subcellularLocation>
    <subcellularLocation>
        <location evidence="2">Midbody</location>
    </subcellularLocation>
    <text evidence="1">Localizes to the sperm connecting piece and flagellum during spermiogenesis and to the flagellum in spermatozoa from cauda of the epididymis (By similarity). In sperm cell flagellum, may be associated with tubulin doublets (By similarity).</text>
</comment>